<dbReference type="PIR" id="D92811">
    <property type="entry name" value="AVMS82"/>
</dbReference>
<dbReference type="SMR" id="P01802"/>
<dbReference type="FunCoup" id="P01802">
    <property type="interactions" value="529"/>
</dbReference>
<dbReference type="InParanoid" id="P01802"/>
<dbReference type="Proteomes" id="UP000000589">
    <property type="component" value="Unplaced"/>
</dbReference>
<dbReference type="RNAct" id="P01802">
    <property type="molecule type" value="protein"/>
</dbReference>
<dbReference type="GO" id="GO:0005576">
    <property type="term" value="C:extracellular region"/>
    <property type="evidence" value="ECO:0007669"/>
    <property type="project" value="UniProtKB-ARBA"/>
</dbReference>
<dbReference type="GO" id="GO:0019814">
    <property type="term" value="C:immunoglobulin complex"/>
    <property type="evidence" value="ECO:0007669"/>
    <property type="project" value="UniProtKB-KW"/>
</dbReference>
<dbReference type="GO" id="GO:0003823">
    <property type="term" value="F:antigen binding"/>
    <property type="evidence" value="ECO:0000318"/>
    <property type="project" value="GO_Central"/>
</dbReference>
<dbReference type="GO" id="GO:0016064">
    <property type="term" value="P:immunoglobulin mediated immune response"/>
    <property type="evidence" value="ECO:0000318"/>
    <property type="project" value="GO_Central"/>
</dbReference>
<dbReference type="CDD" id="cd04981">
    <property type="entry name" value="IgV_H"/>
    <property type="match status" value="1"/>
</dbReference>
<dbReference type="FunFam" id="2.60.40.10:FF:001372">
    <property type="entry name" value="Ig heavy chain V region M603"/>
    <property type="match status" value="1"/>
</dbReference>
<dbReference type="Gene3D" id="2.60.40.10">
    <property type="entry name" value="Immunoglobulins"/>
    <property type="match status" value="1"/>
</dbReference>
<dbReference type="InterPro" id="IPR007110">
    <property type="entry name" value="Ig-like_dom"/>
</dbReference>
<dbReference type="InterPro" id="IPR036179">
    <property type="entry name" value="Ig-like_dom_sf"/>
</dbReference>
<dbReference type="InterPro" id="IPR013783">
    <property type="entry name" value="Ig-like_fold"/>
</dbReference>
<dbReference type="InterPro" id="IPR003599">
    <property type="entry name" value="Ig_sub"/>
</dbReference>
<dbReference type="InterPro" id="IPR013106">
    <property type="entry name" value="Ig_V-set"/>
</dbReference>
<dbReference type="InterPro" id="IPR050199">
    <property type="entry name" value="IgHV"/>
</dbReference>
<dbReference type="PANTHER" id="PTHR23266">
    <property type="entry name" value="IMMUNOGLOBULIN HEAVY CHAIN"/>
    <property type="match status" value="1"/>
</dbReference>
<dbReference type="Pfam" id="PF07686">
    <property type="entry name" value="V-set"/>
    <property type="match status" value="1"/>
</dbReference>
<dbReference type="SMART" id="SM00409">
    <property type="entry name" value="IG"/>
    <property type="match status" value="1"/>
</dbReference>
<dbReference type="SMART" id="SM00406">
    <property type="entry name" value="IGv"/>
    <property type="match status" value="1"/>
</dbReference>
<dbReference type="SUPFAM" id="SSF48726">
    <property type="entry name" value="Immunoglobulin"/>
    <property type="match status" value="1"/>
</dbReference>
<dbReference type="PROSITE" id="PS50835">
    <property type="entry name" value="IG_LIKE"/>
    <property type="match status" value="1"/>
</dbReference>
<name>HVM33_MOUSE</name>
<protein>
    <recommendedName>
        <fullName>Ig heavy chain V-III region W3082</fullName>
    </recommendedName>
</protein>
<proteinExistence type="evidence at protein level"/>
<comment type="miscellaneous">
    <text>This chain was isolated from a myeloma protein that binds inulin.</text>
</comment>
<keyword id="KW-1064">Adaptive immunity</keyword>
<keyword id="KW-0903">Direct protein sequencing</keyword>
<keyword id="KW-1015">Disulfide bond</keyword>
<keyword id="KW-0391">Immunity</keyword>
<keyword id="KW-1280">Immunoglobulin</keyword>
<keyword id="KW-1185">Reference proteome</keyword>
<organism>
    <name type="scientific">Mus musculus</name>
    <name type="common">Mouse</name>
    <dbReference type="NCBI Taxonomy" id="10090"/>
    <lineage>
        <taxon>Eukaryota</taxon>
        <taxon>Metazoa</taxon>
        <taxon>Chordata</taxon>
        <taxon>Craniata</taxon>
        <taxon>Vertebrata</taxon>
        <taxon>Euteleostomi</taxon>
        <taxon>Mammalia</taxon>
        <taxon>Eutheria</taxon>
        <taxon>Euarchontoglires</taxon>
        <taxon>Glires</taxon>
        <taxon>Rodentia</taxon>
        <taxon>Myomorpha</taxon>
        <taxon>Muroidea</taxon>
        <taxon>Muridae</taxon>
        <taxon>Murinae</taxon>
        <taxon>Mus</taxon>
        <taxon>Mus</taxon>
    </lineage>
</organism>
<accession>P01802</accession>
<feature type="chain" id="PRO_0000059887" description="Ig heavy chain V-III region W3082">
    <location>
        <begin position="1"/>
        <end position="115" status="greater than"/>
    </location>
</feature>
<feature type="domain" description="Ig-like">
    <location>
        <begin position="1"/>
        <end position="114"/>
    </location>
</feature>
<feature type="disulfide bond" evidence="1">
    <location>
        <begin position="22"/>
        <end position="98"/>
    </location>
</feature>
<feature type="non-terminal residue">
    <location>
        <position position="115"/>
    </location>
</feature>
<evidence type="ECO:0000255" key="1">
    <source>
        <dbReference type="PROSITE-ProRule" id="PRU00114"/>
    </source>
</evidence>
<reference key="1">
    <citation type="journal article" date="1982" name="J. Immunol.">
        <title>The complete V domain amino acid sequences of two myeloma inulin-binding proteins.</title>
        <authorList>
            <person name="Johnson N."/>
            <person name="Slankard J."/>
            <person name="Paul L."/>
            <person name="Hood L."/>
        </authorList>
    </citation>
    <scope>PROTEIN SEQUENCE</scope>
</reference>
<sequence length="115" mass="12887">EVKLEESGGGLVQPGGSMKLSCVASGFTFSNYWMNWVRQSPEKGLEWVAEIRLKSHNYATHYAESVKGRFTISRDDSKSSVYLRMNNLRPEDTGIYYCTTGFAYWGQGTLVTVSA</sequence>